<evidence type="ECO:0000255" key="1">
    <source>
        <dbReference type="HAMAP-Rule" id="MF_01131"/>
    </source>
</evidence>
<proteinExistence type="inferred from homology"/>
<reference key="1">
    <citation type="submission" date="2008-10" db="EMBL/GenBank/DDBJ databases">
        <title>Genome sequence of Bacillus cereus AH820.</title>
        <authorList>
            <person name="Dodson R.J."/>
            <person name="Durkin A.S."/>
            <person name="Rosovitz M.J."/>
            <person name="Rasko D.A."/>
            <person name="Hoffmaster A."/>
            <person name="Ravel J."/>
            <person name="Sutton G."/>
        </authorList>
    </citation>
    <scope>NUCLEOTIDE SEQUENCE [LARGE SCALE GENOMIC DNA]</scope>
    <source>
        <strain>AH820</strain>
    </source>
</reference>
<dbReference type="EMBL" id="CP001283">
    <property type="protein sequence ID" value="ACK88042.1"/>
    <property type="molecule type" value="Genomic_DNA"/>
</dbReference>
<dbReference type="RefSeq" id="WP_000437700.1">
    <property type="nucleotide sequence ID" value="NC_011773.1"/>
</dbReference>
<dbReference type="SMR" id="B7JM56"/>
<dbReference type="KEGG" id="bcu:BCAH820_0289"/>
<dbReference type="HOGENOM" id="CLU_061534_1_1_9"/>
<dbReference type="Proteomes" id="UP000001363">
    <property type="component" value="Chromosome"/>
</dbReference>
<dbReference type="GO" id="GO:0005737">
    <property type="term" value="C:cytoplasm"/>
    <property type="evidence" value="ECO:0007669"/>
    <property type="project" value="UniProtKB-SubCell"/>
</dbReference>
<dbReference type="GO" id="GO:0003677">
    <property type="term" value="F:DNA binding"/>
    <property type="evidence" value="ECO:0007669"/>
    <property type="project" value="UniProtKB-UniRule"/>
</dbReference>
<dbReference type="GO" id="GO:0003700">
    <property type="term" value="F:DNA-binding transcription factor activity"/>
    <property type="evidence" value="ECO:0007669"/>
    <property type="project" value="UniProtKB-UniRule"/>
</dbReference>
<dbReference type="GO" id="GO:0045892">
    <property type="term" value="P:negative regulation of DNA-templated transcription"/>
    <property type="evidence" value="ECO:0007669"/>
    <property type="project" value="InterPro"/>
</dbReference>
<dbReference type="GO" id="GO:0051775">
    <property type="term" value="P:response to redox state"/>
    <property type="evidence" value="ECO:0007669"/>
    <property type="project" value="InterPro"/>
</dbReference>
<dbReference type="Gene3D" id="3.40.50.720">
    <property type="entry name" value="NAD(P)-binding Rossmann-like Domain"/>
    <property type="match status" value="1"/>
</dbReference>
<dbReference type="Gene3D" id="1.10.10.10">
    <property type="entry name" value="Winged helix-like DNA-binding domain superfamily/Winged helix DNA-binding domain"/>
    <property type="match status" value="1"/>
</dbReference>
<dbReference type="HAMAP" id="MF_01131">
    <property type="entry name" value="Rex"/>
    <property type="match status" value="1"/>
</dbReference>
<dbReference type="InterPro" id="IPR003781">
    <property type="entry name" value="CoA-bd"/>
</dbReference>
<dbReference type="InterPro" id="IPR036291">
    <property type="entry name" value="NAD(P)-bd_dom_sf"/>
</dbReference>
<dbReference type="InterPro" id="IPR009718">
    <property type="entry name" value="Rex_DNA-bd_C_dom"/>
</dbReference>
<dbReference type="InterPro" id="IPR022876">
    <property type="entry name" value="Tscrpt_rep_Rex"/>
</dbReference>
<dbReference type="InterPro" id="IPR036388">
    <property type="entry name" value="WH-like_DNA-bd_sf"/>
</dbReference>
<dbReference type="InterPro" id="IPR036390">
    <property type="entry name" value="WH_DNA-bd_sf"/>
</dbReference>
<dbReference type="NCBIfam" id="NF003989">
    <property type="entry name" value="PRK05472.1-3"/>
    <property type="match status" value="1"/>
</dbReference>
<dbReference type="NCBIfam" id="NF003991">
    <property type="entry name" value="PRK05472.1-5"/>
    <property type="match status" value="1"/>
</dbReference>
<dbReference type="NCBIfam" id="NF003994">
    <property type="entry name" value="PRK05472.2-3"/>
    <property type="match status" value="1"/>
</dbReference>
<dbReference type="NCBIfam" id="NF003995">
    <property type="entry name" value="PRK05472.2-4"/>
    <property type="match status" value="1"/>
</dbReference>
<dbReference type="NCBIfam" id="NF003996">
    <property type="entry name" value="PRK05472.2-5"/>
    <property type="match status" value="1"/>
</dbReference>
<dbReference type="PANTHER" id="PTHR35786">
    <property type="entry name" value="REDOX-SENSING TRANSCRIPTIONAL REPRESSOR REX"/>
    <property type="match status" value="1"/>
</dbReference>
<dbReference type="PANTHER" id="PTHR35786:SF1">
    <property type="entry name" value="REDOX-SENSING TRANSCRIPTIONAL REPRESSOR REX 1"/>
    <property type="match status" value="1"/>
</dbReference>
<dbReference type="Pfam" id="PF02629">
    <property type="entry name" value="CoA_binding"/>
    <property type="match status" value="1"/>
</dbReference>
<dbReference type="Pfam" id="PF06971">
    <property type="entry name" value="Put_DNA-bind_N"/>
    <property type="match status" value="1"/>
</dbReference>
<dbReference type="SMART" id="SM00881">
    <property type="entry name" value="CoA_binding"/>
    <property type="match status" value="1"/>
</dbReference>
<dbReference type="SUPFAM" id="SSF51735">
    <property type="entry name" value="NAD(P)-binding Rossmann-fold domains"/>
    <property type="match status" value="1"/>
</dbReference>
<dbReference type="SUPFAM" id="SSF46785">
    <property type="entry name" value="Winged helix' DNA-binding domain"/>
    <property type="match status" value="1"/>
</dbReference>
<organism>
    <name type="scientific">Bacillus cereus (strain AH820)</name>
    <dbReference type="NCBI Taxonomy" id="405535"/>
    <lineage>
        <taxon>Bacteria</taxon>
        <taxon>Bacillati</taxon>
        <taxon>Bacillota</taxon>
        <taxon>Bacilli</taxon>
        <taxon>Bacillales</taxon>
        <taxon>Bacillaceae</taxon>
        <taxon>Bacillus</taxon>
        <taxon>Bacillus cereus group</taxon>
    </lineage>
</organism>
<name>REX_BACC0</name>
<gene>
    <name evidence="1" type="primary">rex</name>
    <name type="ordered locus">BCAH820_0289</name>
</gene>
<accession>B7JM56</accession>
<sequence length="209" mass="23502">MEQQKIPQATAKRLPLYYRFIQNLSLSGKQRVSSAELSEAVKVDSATIRRDFSYFGALGKKGYGYNVNYLLSFFRETLDQDDITRVALIGVGNLGTAFLHYNFTKNNNTKIEMAFDVSEEKVGTEIGGIPVYHLDELEERLSSDIQVAILTVPATVAQSVADRLAETNVHGILNFTPARLNVSDNIRIHHIDLAVELQTLVYFLKNYPQ</sequence>
<protein>
    <recommendedName>
        <fullName evidence="1">Redox-sensing transcriptional repressor Rex</fullName>
    </recommendedName>
</protein>
<keyword id="KW-0963">Cytoplasm</keyword>
<keyword id="KW-0238">DNA-binding</keyword>
<keyword id="KW-0520">NAD</keyword>
<keyword id="KW-0678">Repressor</keyword>
<keyword id="KW-0804">Transcription</keyword>
<keyword id="KW-0805">Transcription regulation</keyword>
<comment type="function">
    <text evidence="1">Modulates transcription in response to changes in cellular NADH/NAD(+) redox state.</text>
</comment>
<comment type="subunit">
    <text evidence="1">Homodimer.</text>
</comment>
<comment type="subcellular location">
    <subcellularLocation>
        <location evidence="1">Cytoplasm</location>
    </subcellularLocation>
</comment>
<comment type="similarity">
    <text evidence="1">Belongs to the transcriptional regulatory Rex family.</text>
</comment>
<feature type="chain" id="PRO_1000137316" description="Redox-sensing transcriptional repressor Rex">
    <location>
        <begin position="1"/>
        <end position="209"/>
    </location>
</feature>
<feature type="DNA-binding region" description="H-T-H motif" evidence="1">
    <location>
        <begin position="16"/>
        <end position="55"/>
    </location>
</feature>
<feature type="binding site" evidence="1">
    <location>
        <begin position="90"/>
        <end position="95"/>
    </location>
    <ligand>
        <name>NAD(+)</name>
        <dbReference type="ChEBI" id="CHEBI:57540"/>
    </ligand>
</feature>